<name>LEPA_PROM4</name>
<dbReference type="EC" id="3.6.5.n1" evidence="1"/>
<dbReference type="EMBL" id="CP000878">
    <property type="protein sequence ID" value="ABX08349.1"/>
    <property type="molecule type" value="Genomic_DNA"/>
</dbReference>
<dbReference type="RefSeq" id="WP_012194972.1">
    <property type="nucleotide sequence ID" value="NC_009976.1"/>
</dbReference>
<dbReference type="SMR" id="A9BE39"/>
<dbReference type="STRING" id="93059.P9211_04181"/>
<dbReference type="KEGG" id="pmj:P9211_04181"/>
<dbReference type="eggNOG" id="COG0481">
    <property type="taxonomic scope" value="Bacteria"/>
</dbReference>
<dbReference type="HOGENOM" id="CLU_009995_3_3_3"/>
<dbReference type="OrthoDB" id="580826at2"/>
<dbReference type="Proteomes" id="UP000000788">
    <property type="component" value="Chromosome"/>
</dbReference>
<dbReference type="GO" id="GO:0005886">
    <property type="term" value="C:plasma membrane"/>
    <property type="evidence" value="ECO:0007669"/>
    <property type="project" value="UniProtKB-SubCell"/>
</dbReference>
<dbReference type="GO" id="GO:0005525">
    <property type="term" value="F:GTP binding"/>
    <property type="evidence" value="ECO:0007669"/>
    <property type="project" value="UniProtKB-KW"/>
</dbReference>
<dbReference type="GO" id="GO:0003924">
    <property type="term" value="F:GTPase activity"/>
    <property type="evidence" value="ECO:0007669"/>
    <property type="project" value="InterPro"/>
</dbReference>
<dbReference type="GO" id="GO:0043022">
    <property type="term" value="F:ribosome binding"/>
    <property type="evidence" value="ECO:0007669"/>
    <property type="project" value="TreeGrafter"/>
</dbReference>
<dbReference type="GO" id="GO:0045727">
    <property type="term" value="P:positive regulation of translation"/>
    <property type="evidence" value="ECO:0007669"/>
    <property type="project" value="TreeGrafter"/>
</dbReference>
<dbReference type="GO" id="GO:0006412">
    <property type="term" value="P:translation"/>
    <property type="evidence" value="ECO:0007669"/>
    <property type="project" value="UniProtKB-KW"/>
</dbReference>
<dbReference type="CDD" id="cd03699">
    <property type="entry name" value="EF4_II"/>
    <property type="match status" value="1"/>
</dbReference>
<dbReference type="CDD" id="cd16260">
    <property type="entry name" value="EF4_III"/>
    <property type="match status" value="1"/>
</dbReference>
<dbReference type="CDD" id="cd01890">
    <property type="entry name" value="LepA"/>
    <property type="match status" value="1"/>
</dbReference>
<dbReference type="CDD" id="cd03709">
    <property type="entry name" value="lepA_C"/>
    <property type="match status" value="1"/>
</dbReference>
<dbReference type="FunFam" id="3.40.50.300:FF:000078">
    <property type="entry name" value="Elongation factor 4"/>
    <property type="match status" value="1"/>
</dbReference>
<dbReference type="FunFam" id="2.40.30.10:FF:000015">
    <property type="entry name" value="Translation factor GUF1, mitochondrial"/>
    <property type="match status" value="1"/>
</dbReference>
<dbReference type="FunFam" id="3.30.70.240:FF:000007">
    <property type="entry name" value="Translation factor GUF1, mitochondrial"/>
    <property type="match status" value="1"/>
</dbReference>
<dbReference type="FunFam" id="3.30.70.2570:FF:000001">
    <property type="entry name" value="Translation factor GUF1, mitochondrial"/>
    <property type="match status" value="1"/>
</dbReference>
<dbReference type="FunFam" id="3.30.70.870:FF:000004">
    <property type="entry name" value="Translation factor GUF1, mitochondrial"/>
    <property type="match status" value="1"/>
</dbReference>
<dbReference type="Gene3D" id="3.30.70.240">
    <property type="match status" value="1"/>
</dbReference>
<dbReference type="Gene3D" id="3.30.70.2570">
    <property type="entry name" value="Elongation factor 4, C-terminal domain"/>
    <property type="match status" value="1"/>
</dbReference>
<dbReference type="Gene3D" id="3.30.70.870">
    <property type="entry name" value="Elongation Factor G (Translational Gtpase), domain 3"/>
    <property type="match status" value="1"/>
</dbReference>
<dbReference type="Gene3D" id="3.40.50.300">
    <property type="entry name" value="P-loop containing nucleotide triphosphate hydrolases"/>
    <property type="match status" value="1"/>
</dbReference>
<dbReference type="Gene3D" id="2.40.30.10">
    <property type="entry name" value="Translation factors"/>
    <property type="match status" value="1"/>
</dbReference>
<dbReference type="HAMAP" id="MF_03138">
    <property type="entry name" value="GUFP"/>
    <property type="match status" value="1"/>
</dbReference>
<dbReference type="HAMAP" id="MF_00071">
    <property type="entry name" value="LepA"/>
    <property type="match status" value="1"/>
</dbReference>
<dbReference type="InterPro" id="IPR006297">
    <property type="entry name" value="EF-4"/>
</dbReference>
<dbReference type="InterPro" id="IPR035647">
    <property type="entry name" value="EFG_III/V"/>
</dbReference>
<dbReference type="InterPro" id="IPR000640">
    <property type="entry name" value="EFG_V-like"/>
</dbReference>
<dbReference type="InterPro" id="IPR004161">
    <property type="entry name" value="EFTu-like_2"/>
</dbReference>
<dbReference type="InterPro" id="IPR031157">
    <property type="entry name" value="G_TR_CS"/>
</dbReference>
<dbReference type="InterPro" id="IPR027518">
    <property type="entry name" value="GUFP"/>
</dbReference>
<dbReference type="InterPro" id="IPR038363">
    <property type="entry name" value="LepA_C_sf"/>
</dbReference>
<dbReference type="InterPro" id="IPR013842">
    <property type="entry name" value="LepA_CTD"/>
</dbReference>
<dbReference type="InterPro" id="IPR035654">
    <property type="entry name" value="LepA_IV"/>
</dbReference>
<dbReference type="InterPro" id="IPR027417">
    <property type="entry name" value="P-loop_NTPase"/>
</dbReference>
<dbReference type="InterPro" id="IPR005225">
    <property type="entry name" value="Small_GTP-bd"/>
</dbReference>
<dbReference type="InterPro" id="IPR000795">
    <property type="entry name" value="T_Tr_GTP-bd_dom"/>
</dbReference>
<dbReference type="InterPro" id="IPR009000">
    <property type="entry name" value="Transl_B-barrel_sf"/>
</dbReference>
<dbReference type="NCBIfam" id="TIGR01393">
    <property type="entry name" value="lepA"/>
    <property type="match status" value="1"/>
</dbReference>
<dbReference type="NCBIfam" id="TIGR00231">
    <property type="entry name" value="small_GTP"/>
    <property type="match status" value="1"/>
</dbReference>
<dbReference type="PANTHER" id="PTHR43512:SF4">
    <property type="entry name" value="TRANSLATION FACTOR GUF1 HOMOLOG, CHLOROPLASTIC"/>
    <property type="match status" value="1"/>
</dbReference>
<dbReference type="PANTHER" id="PTHR43512">
    <property type="entry name" value="TRANSLATION FACTOR GUF1-RELATED"/>
    <property type="match status" value="1"/>
</dbReference>
<dbReference type="Pfam" id="PF00679">
    <property type="entry name" value="EFG_C"/>
    <property type="match status" value="1"/>
</dbReference>
<dbReference type="Pfam" id="PF00009">
    <property type="entry name" value="GTP_EFTU"/>
    <property type="match status" value="1"/>
</dbReference>
<dbReference type="Pfam" id="PF03144">
    <property type="entry name" value="GTP_EFTU_D2"/>
    <property type="match status" value="1"/>
</dbReference>
<dbReference type="Pfam" id="PF06421">
    <property type="entry name" value="LepA_C"/>
    <property type="match status" value="1"/>
</dbReference>
<dbReference type="PRINTS" id="PR00315">
    <property type="entry name" value="ELONGATNFCT"/>
</dbReference>
<dbReference type="SMART" id="SM00838">
    <property type="entry name" value="EFG_C"/>
    <property type="match status" value="1"/>
</dbReference>
<dbReference type="SUPFAM" id="SSF54980">
    <property type="entry name" value="EF-G C-terminal domain-like"/>
    <property type="match status" value="2"/>
</dbReference>
<dbReference type="SUPFAM" id="SSF52540">
    <property type="entry name" value="P-loop containing nucleoside triphosphate hydrolases"/>
    <property type="match status" value="1"/>
</dbReference>
<dbReference type="SUPFAM" id="SSF50447">
    <property type="entry name" value="Translation proteins"/>
    <property type="match status" value="1"/>
</dbReference>
<dbReference type="PROSITE" id="PS00301">
    <property type="entry name" value="G_TR_1"/>
    <property type="match status" value="1"/>
</dbReference>
<dbReference type="PROSITE" id="PS51722">
    <property type="entry name" value="G_TR_2"/>
    <property type="match status" value="1"/>
</dbReference>
<protein>
    <recommendedName>
        <fullName evidence="1">Elongation factor 4</fullName>
        <shortName evidence="1">EF-4</shortName>
        <ecNumber evidence="1">3.6.5.n1</ecNumber>
    </recommendedName>
    <alternativeName>
        <fullName evidence="1">Ribosomal back-translocase LepA</fullName>
    </alternativeName>
</protein>
<proteinExistence type="inferred from homology"/>
<reference key="1">
    <citation type="journal article" date="2007" name="PLoS Genet.">
        <title>Patterns and implications of gene gain and loss in the evolution of Prochlorococcus.</title>
        <authorList>
            <person name="Kettler G.C."/>
            <person name="Martiny A.C."/>
            <person name="Huang K."/>
            <person name="Zucker J."/>
            <person name="Coleman M.L."/>
            <person name="Rodrigue S."/>
            <person name="Chen F."/>
            <person name="Lapidus A."/>
            <person name="Ferriera S."/>
            <person name="Johnson J."/>
            <person name="Steglich C."/>
            <person name="Church G.M."/>
            <person name="Richardson P."/>
            <person name="Chisholm S.W."/>
        </authorList>
    </citation>
    <scope>NUCLEOTIDE SEQUENCE [LARGE SCALE GENOMIC DNA]</scope>
    <source>
        <strain>MIT 9211</strain>
    </source>
</reference>
<sequence length="602" mass="66997">MTNVPVSRLRNFCIIAHIDHGKSTLADRLLQDTATVASRDMQDQFLDNMELERERGITIKLQAARMKYTATDGNEYVLNLIDTPGHVDFSYEVSRSLQACEGALLVVDASQGVEAQTLANVYLALENDLEIIPVLNKVDLPGSDPEKIKKEIESIIGLDTSQAISCSAKTGLGVTDILQAVVERVPPPKDTLEQATQALIFDSYYDPYRGVIVYFRVTAGSISARDQILLMASKKSYELDEIGIMAPDQQKVNELHAGEVGYLAASIKAVSDARVGDTITLLNAPAADPLPGYTEAKPMVFCGLFPTDADQYPDLREALEKLQLSDAALKYEPETSSAMGFGFRCGFLGLLHMEIVQERLEREYDLDLIVTAPSVIYQVNMLNGEALMIDNPATLPDPQHRDSIEEPYVRMEIYAPNDYNGTLMGLCQDRRGEFVDMKYITTDRVTLIYEMPLAEVVTDFFDQMKSRTKGYASMEYHLIGYRKNDLVRLDVLINSDKADPLTTIVHRDKAYGVGRALVDKLKELIPRQQFKIPLQASIGSRIIASQNISALRKDVLAKCYGGDISRKKKLLQKQAKGKKRMKSMGKVDVPQEAFMAVLKLNS</sequence>
<keyword id="KW-0997">Cell inner membrane</keyword>
<keyword id="KW-1003">Cell membrane</keyword>
<keyword id="KW-0342">GTP-binding</keyword>
<keyword id="KW-0378">Hydrolase</keyword>
<keyword id="KW-0472">Membrane</keyword>
<keyword id="KW-0547">Nucleotide-binding</keyword>
<keyword id="KW-0648">Protein biosynthesis</keyword>
<keyword id="KW-1185">Reference proteome</keyword>
<feature type="chain" id="PRO_1000092427" description="Elongation factor 4">
    <location>
        <begin position="1"/>
        <end position="602"/>
    </location>
</feature>
<feature type="domain" description="tr-type G">
    <location>
        <begin position="7"/>
        <end position="189"/>
    </location>
</feature>
<feature type="binding site" evidence="1">
    <location>
        <begin position="19"/>
        <end position="24"/>
    </location>
    <ligand>
        <name>GTP</name>
        <dbReference type="ChEBI" id="CHEBI:37565"/>
    </ligand>
</feature>
<feature type="binding site" evidence="1">
    <location>
        <begin position="136"/>
        <end position="139"/>
    </location>
    <ligand>
        <name>GTP</name>
        <dbReference type="ChEBI" id="CHEBI:37565"/>
    </ligand>
</feature>
<evidence type="ECO:0000255" key="1">
    <source>
        <dbReference type="HAMAP-Rule" id="MF_00071"/>
    </source>
</evidence>
<organism>
    <name type="scientific">Prochlorococcus marinus (strain MIT 9211)</name>
    <dbReference type="NCBI Taxonomy" id="93059"/>
    <lineage>
        <taxon>Bacteria</taxon>
        <taxon>Bacillati</taxon>
        <taxon>Cyanobacteriota</taxon>
        <taxon>Cyanophyceae</taxon>
        <taxon>Synechococcales</taxon>
        <taxon>Prochlorococcaceae</taxon>
        <taxon>Prochlorococcus</taxon>
    </lineage>
</organism>
<comment type="function">
    <text evidence="1">Required for accurate and efficient protein synthesis under certain stress conditions. May act as a fidelity factor of the translation reaction, by catalyzing a one-codon backward translocation of tRNAs on improperly translocated ribosomes. Back-translocation proceeds from a post-translocation (POST) complex to a pre-translocation (PRE) complex, thus giving elongation factor G a second chance to translocate the tRNAs correctly. Binds to ribosomes in a GTP-dependent manner.</text>
</comment>
<comment type="catalytic activity">
    <reaction evidence="1">
        <text>GTP + H2O = GDP + phosphate + H(+)</text>
        <dbReference type="Rhea" id="RHEA:19669"/>
        <dbReference type="ChEBI" id="CHEBI:15377"/>
        <dbReference type="ChEBI" id="CHEBI:15378"/>
        <dbReference type="ChEBI" id="CHEBI:37565"/>
        <dbReference type="ChEBI" id="CHEBI:43474"/>
        <dbReference type="ChEBI" id="CHEBI:58189"/>
        <dbReference type="EC" id="3.6.5.n1"/>
    </reaction>
</comment>
<comment type="subcellular location">
    <subcellularLocation>
        <location evidence="1">Cell inner membrane</location>
        <topology evidence="1">Peripheral membrane protein</topology>
        <orientation evidence="1">Cytoplasmic side</orientation>
    </subcellularLocation>
</comment>
<comment type="similarity">
    <text evidence="1">Belongs to the TRAFAC class translation factor GTPase superfamily. Classic translation factor GTPase family. LepA subfamily.</text>
</comment>
<gene>
    <name evidence="1" type="primary">lepA</name>
    <name type="ordered locus">P9211_04181</name>
</gene>
<accession>A9BE39</accession>